<keyword id="KW-0963">Cytoplasm</keyword>
<keyword id="KW-0378">Hydrolase</keyword>
<keyword id="KW-0479">Metal-binding</keyword>
<keyword id="KW-0547">Nucleotide-binding</keyword>
<keyword id="KW-1185">Reference proteome</keyword>
<reference key="1">
    <citation type="journal article" date="2007" name="PLoS Genet.">
        <title>A tale of two oxidation states: bacterial colonization of arsenic-rich environments.</title>
        <authorList>
            <person name="Muller D."/>
            <person name="Medigue C."/>
            <person name="Koechler S."/>
            <person name="Barbe V."/>
            <person name="Barakat M."/>
            <person name="Talla E."/>
            <person name="Bonnefoy V."/>
            <person name="Krin E."/>
            <person name="Arsene-Ploetze F."/>
            <person name="Carapito C."/>
            <person name="Chandler M."/>
            <person name="Cournoyer B."/>
            <person name="Cruveiller S."/>
            <person name="Dossat C."/>
            <person name="Duval S."/>
            <person name="Heymann M."/>
            <person name="Leize E."/>
            <person name="Lieutaud A."/>
            <person name="Lievremont D."/>
            <person name="Makita Y."/>
            <person name="Mangenot S."/>
            <person name="Nitschke W."/>
            <person name="Ortet P."/>
            <person name="Perdrial N."/>
            <person name="Schoepp B."/>
            <person name="Siguier P."/>
            <person name="Simeonova D.D."/>
            <person name="Rouy Z."/>
            <person name="Segurens B."/>
            <person name="Turlin E."/>
            <person name="Vallenet D."/>
            <person name="van Dorsselaer A."/>
            <person name="Weiss S."/>
            <person name="Weissenbach J."/>
            <person name="Lett M.-C."/>
            <person name="Danchin A."/>
            <person name="Bertin P.N."/>
        </authorList>
    </citation>
    <scope>NUCLEOTIDE SEQUENCE [LARGE SCALE GENOMIC DNA]</scope>
    <source>
        <strain>ULPAs1</strain>
    </source>
</reference>
<organism>
    <name type="scientific">Herminiimonas arsenicoxydans</name>
    <dbReference type="NCBI Taxonomy" id="204773"/>
    <lineage>
        <taxon>Bacteria</taxon>
        <taxon>Pseudomonadati</taxon>
        <taxon>Pseudomonadota</taxon>
        <taxon>Betaproteobacteria</taxon>
        <taxon>Burkholderiales</taxon>
        <taxon>Oxalobacteraceae</taxon>
        <taxon>Herminiimonas</taxon>
    </lineage>
</organism>
<comment type="function">
    <text evidence="1">Nucleotidase that shows phosphatase activity on nucleoside 5'-monophosphates.</text>
</comment>
<comment type="catalytic activity">
    <reaction evidence="1">
        <text>a ribonucleoside 5'-phosphate + H2O = a ribonucleoside + phosphate</text>
        <dbReference type="Rhea" id="RHEA:12484"/>
        <dbReference type="ChEBI" id="CHEBI:15377"/>
        <dbReference type="ChEBI" id="CHEBI:18254"/>
        <dbReference type="ChEBI" id="CHEBI:43474"/>
        <dbReference type="ChEBI" id="CHEBI:58043"/>
        <dbReference type="EC" id="3.1.3.5"/>
    </reaction>
</comment>
<comment type="cofactor">
    <cofactor evidence="1">
        <name>a divalent metal cation</name>
        <dbReference type="ChEBI" id="CHEBI:60240"/>
    </cofactor>
    <text evidence="1">Binds 1 divalent metal cation per subunit.</text>
</comment>
<comment type="subcellular location">
    <subcellularLocation>
        <location evidence="1">Cytoplasm</location>
    </subcellularLocation>
</comment>
<comment type="similarity">
    <text evidence="1">Belongs to the SurE nucleotidase family.</text>
</comment>
<feature type="chain" id="PRO_1000007739" description="5'-nucleotidase SurE">
    <location>
        <begin position="1"/>
        <end position="245"/>
    </location>
</feature>
<feature type="binding site" evidence="1">
    <location>
        <position position="8"/>
    </location>
    <ligand>
        <name>a divalent metal cation</name>
        <dbReference type="ChEBI" id="CHEBI:60240"/>
    </ligand>
</feature>
<feature type="binding site" evidence="1">
    <location>
        <position position="9"/>
    </location>
    <ligand>
        <name>a divalent metal cation</name>
        <dbReference type="ChEBI" id="CHEBI:60240"/>
    </ligand>
</feature>
<feature type="binding site" evidence="1">
    <location>
        <position position="39"/>
    </location>
    <ligand>
        <name>a divalent metal cation</name>
        <dbReference type="ChEBI" id="CHEBI:60240"/>
    </ligand>
</feature>
<feature type="binding site" evidence="1">
    <location>
        <position position="91"/>
    </location>
    <ligand>
        <name>a divalent metal cation</name>
        <dbReference type="ChEBI" id="CHEBI:60240"/>
    </ligand>
</feature>
<accession>A4G4J2</accession>
<evidence type="ECO:0000255" key="1">
    <source>
        <dbReference type="HAMAP-Rule" id="MF_00060"/>
    </source>
</evidence>
<protein>
    <recommendedName>
        <fullName evidence="1">5'-nucleotidase SurE</fullName>
        <ecNumber evidence="1">3.1.3.5</ecNumber>
    </recommendedName>
    <alternativeName>
        <fullName evidence="1">Nucleoside 5'-monophosphate phosphohydrolase</fullName>
    </alternativeName>
</protein>
<gene>
    <name evidence="1" type="primary">surE</name>
    <name type="ordered locus">HEAR1254</name>
</gene>
<sequence>MKILISNDDGYLAPGLIALADALAPIADIVVVAPDSNRSGSSNSLTLDRPLSVYQASNGFYFINGTPSDCVHIALTGIMSFRPDLIVSGINQGQNMGDDTLYSGTVAAATEGHLFGIPAIAFSQLEKGWAELKSAARVARDIVERRFETLPENFLLNVNIPNLPYEQLKPAVATRLGRRHQSEAVIKAQDPHGRDIYWIGPSGGQKDAGEGTDFHATAQGHVSITPLQIDLTQNAQLAALKKVLA</sequence>
<proteinExistence type="inferred from homology"/>
<dbReference type="EC" id="3.1.3.5" evidence="1"/>
<dbReference type="EMBL" id="CU207211">
    <property type="protein sequence ID" value="CAL61429.1"/>
    <property type="molecule type" value="Genomic_DNA"/>
</dbReference>
<dbReference type="SMR" id="A4G4J2"/>
<dbReference type="STRING" id="204773.HEAR1254"/>
<dbReference type="KEGG" id="har:HEAR1254"/>
<dbReference type="eggNOG" id="COG0496">
    <property type="taxonomic scope" value="Bacteria"/>
</dbReference>
<dbReference type="HOGENOM" id="CLU_045192_1_2_4"/>
<dbReference type="OrthoDB" id="9780815at2"/>
<dbReference type="Proteomes" id="UP000006697">
    <property type="component" value="Chromosome"/>
</dbReference>
<dbReference type="GO" id="GO:0005737">
    <property type="term" value="C:cytoplasm"/>
    <property type="evidence" value="ECO:0007669"/>
    <property type="project" value="UniProtKB-SubCell"/>
</dbReference>
<dbReference type="GO" id="GO:0008254">
    <property type="term" value="F:3'-nucleotidase activity"/>
    <property type="evidence" value="ECO:0007669"/>
    <property type="project" value="TreeGrafter"/>
</dbReference>
<dbReference type="GO" id="GO:0008253">
    <property type="term" value="F:5'-nucleotidase activity"/>
    <property type="evidence" value="ECO:0007669"/>
    <property type="project" value="UniProtKB-UniRule"/>
</dbReference>
<dbReference type="GO" id="GO:0004309">
    <property type="term" value="F:exopolyphosphatase activity"/>
    <property type="evidence" value="ECO:0007669"/>
    <property type="project" value="TreeGrafter"/>
</dbReference>
<dbReference type="GO" id="GO:0046872">
    <property type="term" value="F:metal ion binding"/>
    <property type="evidence" value="ECO:0007669"/>
    <property type="project" value="UniProtKB-UniRule"/>
</dbReference>
<dbReference type="GO" id="GO:0000166">
    <property type="term" value="F:nucleotide binding"/>
    <property type="evidence" value="ECO:0007669"/>
    <property type="project" value="UniProtKB-KW"/>
</dbReference>
<dbReference type="FunFam" id="3.40.1210.10:FF:000001">
    <property type="entry name" value="5'/3'-nucleotidase SurE"/>
    <property type="match status" value="1"/>
</dbReference>
<dbReference type="Gene3D" id="3.40.1210.10">
    <property type="entry name" value="Survival protein SurE-like phosphatase/nucleotidase"/>
    <property type="match status" value="1"/>
</dbReference>
<dbReference type="HAMAP" id="MF_00060">
    <property type="entry name" value="SurE"/>
    <property type="match status" value="1"/>
</dbReference>
<dbReference type="InterPro" id="IPR030048">
    <property type="entry name" value="SurE"/>
</dbReference>
<dbReference type="InterPro" id="IPR002828">
    <property type="entry name" value="SurE-like_Pase/nucleotidase"/>
</dbReference>
<dbReference type="InterPro" id="IPR036523">
    <property type="entry name" value="SurE-like_sf"/>
</dbReference>
<dbReference type="NCBIfam" id="NF001489">
    <property type="entry name" value="PRK00346.1-3"/>
    <property type="match status" value="1"/>
</dbReference>
<dbReference type="NCBIfam" id="NF001490">
    <property type="entry name" value="PRK00346.1-4"/>
    <property type="match status" value="1"/>
</dbReference>
<dbReference type="NCBIfam" id="TIGR00087">
    <property type="entry name" value="surE"/>
    <property type="match status" value="1"/>
</dbReference>
<dbReference type="PANTHER" id="PTHR30457">
    <property type="entry name" value="5'-NUCLEOTIDASE SURE"/>
    <property type="match status" value="1"/>
</dbReference>
<dbReference type="PANTHER" id="PTHR30457:SF12">
    <property type="entry name" value="5'_3'-NUCLEOTIDASE SURE"/>
    <property type="match status" value="1"/>
</dbReference>
<dbReference type="Pfam" id="PF01975">
    <property type="entry name" value="SurE"/>
    <property type="match status" value="1"/>
</dbReference>
<dbReference type="SUPFAM" id="SSF64167">
    <property type="entry name" value="SurE-like"/>
    <property type="match status" value="1"/>
</dbReference>
<name>SURE_HERAR</name>